<gene>
    <name evidence="10" type="primary">Ccnt2</name>
</gene>
<dbReference type="EMBL" id="JX965957">
    <property type="protein sequence ID" value="AFV36779.1"/>
    <property type="molecule type" value="mRNA"/>
</dbReference>
<dbReference type="EMBL" id="JX965958">
    <property type="protein sequence ID" value="AFV36780.1"/>
    <property type="molecule type" value="mRNA"/>
</dbReference>
<dbReference type="EMBL" id="AK154439">
    <property type="protein sequence ID" value="BAE32588.1"/>
    <property type="molecule type" value="mRNA"/>
</dbReference>
<dbReference type="EMBL" id="AC121883">
    <property type="status" value="NOT_ANNOTATED_CDS"/>
    <property type="molecule type" value="Genomic_DNA"/>
</dbReference>
<dbReference type="EMBL" id="BC054122">
    <property type="protein sequence ID" value="AAH54122.1"/>
    <property type="molecule type" value="mRNA"/>
</dbReference>
<dbReference type="CCDS" id="CCDS15248.1">
    <molecule id="Q7TQK0-1"/>
</dbReference>
<dbReference type="RefSeq" id="NP_082675.1">
    <molecule id="Q7TQK0-1"/>
    <property type="nucleotide sequence ID" value="NM_028399.1"/>
</dbReference>
<dbReference type="SMR" id="Q7TQK0"/>
<dbReference type="ComplexPortal" id="CPX-323">
    <molecule id="Q7TQK0-2"/>
    <property type="entry name" value="Positive transcription elongation factor B, CDK9-cyclinT2a complex"/>
</dbReference>
<dbReference type="ComplexPortal" id="CPX-324">
    <molecule id="Q7TQK0-1"/>
    <property type="entry name" value="Positive transcription elongation factor B, CDK9-cyclinT2b complex"/>
</dbReference>
<dbReference type="FunCoup" id="Q7TQK0">
    <property type="interactions" value="4960"/>
</dbReference>
<dbReference type="IntAct" id="Q7TQK0">
    <property type="interactions" value="1"/>
</dbReference>
<dbReference type="STRING" id="10090.ENSMUSP00000027587"/>
<dbReference type="GlyGen" id="Q7TQK0">
    <property type="glycosylation" value="2 sites, 1 O-linked glycan (1 site)"/>
</dbReference>
<dbReference type="iPTMnet" id="Q7TQK0"/>
<dbReference type="PhosphoSitePlus" id="Q7TQK0"/>
<dbReference type="jPOST" id="Q7TQK0"/>
<dbReference type="PaxDb" id="10090-ENSMUSP00000027587"/>
<dbReference type="ProteomicsDB" id="281343">
    <molecule id="Q7TQK0-1"/>
</dbReference>
<dbReference type="ProteomicsDB" id="281344">
    <molecule id="Q7TQK0-2"/>
</dbReference>
<dbReference type="Pumba" id="Q7TQK0"/>
<dbReference type="Antibodypedia" id="1420">
    <property type="antibodies" value="113 antibodies from 27 providers"/>
</dbReference>
<dbReference type="DNASU" id="72949"/>
<dbReference type="Ensembl" id="ENSMUST00000027587.15">
    <molecule id="Q7TQK0-1"/>
    <property type="protein sequence ID" value="ENSMUSP00000027587.9"/>
    <property type="gene ID" value="ENSMUSG00000026349.15"/>
</dbReference>
<dbReference type="Ensembl" id="ENSMUST00000112570.2">
    <molecule id="Q7TQK0-2"/>
    <property type="protein sequence ID" value="ENSMUSP00000108189.2"/>
    <property type="gene ID" value="ENSMUSG00000026349.15"/>
</dbReference>
<dbReference type="GeneID" id="72949"/>
<dbReference type="KEGG" id="mmu:72949"/>
<dbReference type="UCSC" id="uc007ckz.1">
    <molecule id="Q7TQK0-1"/>
    <property type="organism name" value="mouse"/>
</dbReference>
<dbReference type="AGR" id="MGI:1920199"/>
<dbReference type="CTD" id="905"/>
<dbReference type="MGI" id="MGI:1920199">
    <property type="gene designation" value="Ccnt2"/>
</dbReference>
<dbReference type="VEuPathDB" id="HostDB:ENSMUSG00000026349"/>
<dbReference type="eggNOG" id="KOG0834">
    <property type="taxonomic scope" value="Eukaryota"/>
</dbReference>
<dbReference type="GeneTree" id="ENSGT00940000155759"/>
<dbReference type="HOGENOM" id="CLU_012994_1_1_1"/>
<dbReference type="InParanoid" id="Q7TQK0"/>
<dbReference type="OMA" id="SCSVKQY"/>
<dbReference type="OrthoDB" id="25002at2759"/>
<dbReference type="PhylomeDB" id="Q7TQK0"/>
<dbReference type="TreeFam" id="TF101014"/>
<dbReference type="Reactome" id="R-MMU-112382">
    <property type="pathway name" value="Formation of RNA Pol II elongation complex"/>
</dbReference>
<dbReference type="Reactome" id="R-MMU-2173796">
    <property type="pathway name" value="SMAD2/SMAD3:SMAD4 heterotrimer regulates transcription"/>
</dbReference>
<dbReference type="Reactome" id="R-MMU-674695">
    <property type="pathway name" value="RNA Polymerase II Pre-transcription Events"/>
</dbReference>
<dbReference type="Reactome" id="R-MMU-6796648">
    <property type="pathway name" value="TP53 Regulates Transcription of DNA Repair Genes"/>
</dbReference>
<dbReference type="Reactome" id="R-MMU-6807505">
    <property type="pathway name" value="RNA polymerase II transcribes snRNA genes"/>
</dbReference>
<dbReference type="Reactome" id="R-MMU-75955">
    <property type="pathway name" value="RNA Polymerase II Transcription Elongation"/>
</dbReference>
<dbReference type="BioGRID-ORCS" id="72949">
    <property type="hits" value="1 hit in 81 CRISPR screens"/>
</dbReference>
<dbReference type="ChiTaRS" id="Ccnt2">
    <property type="organism name" value="mouse"/>
</dbReference>
<dbReference type="PRO" id="PR:Q7TQK0"/>
<dbReference type="Proteomes" id="UP000000589">
    <property type="component" value="Chromosome 1"/>
</dbReference>
<dbReference type="RNAct" id="Q7TQK0">
    <property type="molecule type" value="protein"/>
</dbReference>
<dbReference type="Bgee" id="ENSMUSG00000026349">
    <property type="expression patterns" value="Expressed in metanephric cortical collecting duct and 255 other cell types or tissues"/>
</dbReference>
<dbReference type="GO" id="GO:0008024">
    <property type="term" value="C:cyclin/CDK positive transcription elongation factor complex"/>
    <property type="evidence" value="ECO:0000266"/>
    <property type="project" value="ComplexPortal"/>
</dbReference>
<dbReference type="GO" id="GO:0005634">
    <property type="term" value="C:nucleus"/>
    <property type="evidence" value="ECO:0000266"/>
    <property type="project" value="ComplexPortal"/>
</dbReference>
<dbReference type="GO" id="GO:0048471">
    <property type="term" value="C:perinuclear region of cytoplasm"/>
    <property type="evidence" value="ECO:0000314"/>
    <property type="project" value="UniProtKB"/>
</dbReference>
<dbReference type="GO" id="GO:0097322">
    <property type="term" value="F:7SK snRNA binding"/>
    <property type="evidence" value="ECO:0000250"/>
    <property type="project" value="UniProtKB"/>
</dbReference>
<dbReference type="GO" id="GO:0003682">
    <property type="term" value="F:chromatin binding"/>
    <property type="evidence" value="ECO:0000314"/>
    <property type="project" value="UniProtKB"/>
</dbReference>
<dbReference type="GO" id="GO:0016538">
    <property type="term" value="F:cyclin-dependent protein serine/threonine kinase regulator activity"/>
    <property type="evidence" value="ECO:0007669"/>
    <property type="project" value="InterPro"/>
</dbReference>
<dbReference type="GO" id="GO:0070063">
    <property type="term" value="F:RNA polymerase binding"/>
    <property type="evidence" value="ECO:0007669"/>
    <property type="project" value="Ensembl"/>
</dbReference>
<dbReference type="GO" id="GO:0001223">
    <property type="term" value="F:transcription coactivator binding"/>
    <property type="evidence" value="ECO:0007669"/>
    <property type="project" value="Ensembl"/>
</dbReference>
<dbReference type="GO" id="GO:0051301">
    <property type="term" value="P:cell division"/>
    <property type="evidence" value="ECO:0007669"/>
    <property type="project" value="UniProtKB-KW"/>
</dbReference>
<dbReference type="GO" id="GO:0019085">
    <property type="term" value="P:early viral transcription"/>
    <property type="evidence" value="ECO:0007669"/>
    <property type="project" value="Ensembl"/>
</dbReference>
<dbReference type="GO" id="GO:0019086">
    <property type="term" value="P:late viral transcription"/>
    <property type="evidence" value="ECO:0007669"/>
    <property type="project" value="Ensembl"/>
</dbReference>
<dbReference type="GO" id="GO:0045944">
    <property type="term" value="P:positive regulation of transcription by RNA polymerase II"/>
    <property type="evidence" value="ECO:0007669"/>
    <property type="project" value="Ensembl"/>
</dbReference>
<dbReference type="GO" id="GO:0032968">
    <property type="term" value="P:positive regulation of transcription elongation by RNA polymerase II"/>
    <property type="evidence" value="ECO:0000266"/>
    <property type="project" value="ComplexPortal"/>
</dbReference>
<dbReference type="GO" id="GO:0051147">
    <property type="term" value="P:regulation of muscle cell differentiation"/>
    <property type="evidence" value="ECO:0000250"/>
    <property type="project" value="UniProtKB"/>
</dbReference>
<dbReference type="GO" id="GO:0007519">
    <property type="term" value="P:skeletal muscle tissue development"/>
    <property type="evidence" value="ECO:0000314"/>
    <property type="project" value="UniProtKB"/>
</dbReference>
<dbReference type="CDD" id="cd20596">
    <property type="entry name" value="CYCLIN_CCNT2_rpt1"/>
    <property type="match status" value="1"/>
</dbReference>
<dbReference type="CDD" id="cd20598">
    <property type="entry name" value="CYCLIN_CCNT2_rpt2"/>
    <property type="match status" value="1"/>
</dbReference>
<dbReference type="FunFam" id="1.10.472.10:FF:000004">
    <property type="entry name" value="Cyclin T2"/>
    <property type="match status" value="1"/>
</dbReference>
<dbReference type="FunFam" id="1.10.472.10:FF:000009">
    <property type="entry name" value="cyclin-T2 isoform X1"/>
    <property type="match status" value="1"/>
</dbReference>
<dbReference type="Gene3D" id="1.10.472.10">
    <property type="entry name" value="Cyclin-like"/>
    <property type="match status" value="2"/>
</dbReference>
<dbReference type="InterPro" id="IPR013763">
    <property type="entry name" value="Cyclin-like_dom"/>
</dbReference>
<dbReference type="InterPro" id="IPR036915">
    <property type="entry name" value="Cyclin-like_sf"/>
</dbReference>
<dbReference type="InterPro" id="IPR043198">
    <property type="entry name" value="Cyclin/Ssn8"/>
</dbReference>
<dbReference type="InterPro" id="IPR047321">
    <property type="entry name" value="CYCLIN_CCNT2_rpt1"/>
</dbReference>
<dbReference type="InterPro" id="IPR047322">
    <property type="entry name" value="CYCLIN_CCNT2_rpt2"/>
</dbReference>
<dbReference type="InterPro" id="IPR006671">
    <property type="entry name" value="Cyclin_N"/>
</dbReference>
<dbReference type="PANTHER" id="PTHR10026">
    <property type="entry name" value="CYCLIN"/>
    <property type="match status" value="1"/>
</dbReference>
<dbReference type="Pfam" id="PF00134">
    <property type="entry name" value="Cyclin_N"/>
    <property type="match status" value="1"/>
</dbReference>
<dbReference type="Pfam" id="PF21797">
    <property type="entry name" value="CycT2-like_C"/>
    <property type="match status" value="1"/>
</dbReference>
<dbReference type="SMART" id="SM00385">
    <property type="entry name" value="CYCLIN"/>
    <property type="match status" value="2"/>
</dbReference>
<dbReference type="SUPFAM" id="SSF47954">
    <property type="entry name" value="Cyclin-like"/>
    <property type="match status" value="2"/>
</dbReference>
<proteinExistence type="evidence at protein level"/>
<protein>
    <recommendedName>
        <fullName evidence="8">Cyclin-T2</fullName>
        <shortName evidence="8">CycT2</shortName>
    </recommendedName>
</protein>
<accession>Q7TQK0</accession>
<accession>K4N0L9</accession>
<accession>K4N2S3</accession>
<name>CCNT2_MOUSE</name>
<sequence>MASGRGASSRWFFTREQLENTPSRRCGVEADEELSHRQQAANLIQDMGQRLNVSQLTINTAIVYMHRFYMHHSFTKFNRNIISPTALFLAAKVEEQARKLEHVIKVAHACLHPLEPLLDTKCDAYLQQTQELVLLETIMLQTLGFEITIEHPHTDVVKCTQLVRASKDLAQTSYFMATNSLHLTTFCLQYKPTVIACVCIHLACKWSNWEIPVSTDGKHWWEYVDPTVTLELLDELTHEFLQILEKTPSRLKRIRNWRAMAKKPKVDGQVSETPLLGSSLVQNSILVDSVTGVPANPSFQKPSTSTFPAPIPLNSGSTSVQDSRASDNLSVLAAGMPSTSYSLSSHQEWPQHPDSARTDPVYTQKQEATLSGSQYISFQQGPSMALHSGLHHRPDKVADHSSAKQEYTHKAGSSKHHGPIPATPGMLPQKMSLDKYREKRKLETLDVDTRDHYLAAHAEQQHKHGPAQAVTGTSVTSPIKMKLPLTNSDRPEKHVAEKKERSGSLKLRIPIPPPDKGPSKEELKMKIKVASSERHSSSDEGSGKSKHSSPHISRDHKEKHKEHPANRHHSSHKYLHMHSGGSKHTADGMPPTVLRSPVGLGPEGVSSASSARKKLHSSEASHNHHSKMSKSSKSAGSSSSSSSVKQYLSSHSSVFNHPLPPPPPVTYQVGYGHLSTLVKLDKKPVEPHGPEANHEYSTSSQHMDYKDTFDMLDSLLSAQGMNM</sequence>
<organism>
    <name type="scientific">Mus musculus</name>
    <name type="common">Mouse</name>
    <dbReference type="NCBI Taxonomy" id="10090"/>
    <lineage>
        <taxon>Eukaryota</taxon>
        <taxon>Metazoa</taxon>
        <taxon>Chordata</taxon>
        <taxon>Craniata</taxon>
        <taxon>Vertebrata</taxon>
        <taxon>Euteleostomi</taxon>
        <taxon>Mammalia</taxon>
        <taxon>Eutheria</taxon>
        <taxon>Euarchontoglires</taxon>
        <taxon>Glires</taxon>
        <taxon>Rodentia</taxon>
        <taxon>Myomorpha</taxon>
        <taxon>Muroidea</taxon>
        <taxon>Muridae</taxon>
        <taxon>Murinae</taxon>
        <taxon>Mus</taxon>
        <taxon>Mus</taxon>
    </lineage>
</organism>
<evidence type="ECO:0000250" key="1">
    <source>
        <dbReference type="UniProtKB" id="O60583"/>
    </source>
</evidence>
<evidence type="ECO:0000255" key="2"/>
<evidence type="ECO:0000256" key="3">
    <source>
        <dbReference type="SAM" id="MobiDB-lite"/>
    </source>
</evidence>
<evidence type="ECO:0000269" key="4">
    <source>
    </source>
</evidence>
<evidence type="ECO:0000269" key="5">
    <source>
    </source>
</evidence>
<evidence type="ECO:0000269" key="6">
    <source>
    </source>
</evidence>
<evidence type="ECO:0000269" key="7">
    <source>
    </source>
</evidence>
<evidence type="ECO:0000303" key="8">
    <source>
    </source>
</evidence>
<evidence type="ECO:0000305" key="9"/>
<evidence type="ECO:0000312" key="10">
    <source>
        <dbReference type="MGI" id="MGI:1920199"/>
    </source>
</evidence>
<evidence type="ECO:0007744" key="11">
    <source>
    </source>
</evidence>
<feature type="chain" id="PRO_0000436037" description="Cyclin-T2">
    <location>
        <begin position="1"/>
        <end position="723"/>
    </location>
</feature>
<feature type="domain" description="Cyclin N-terminal" evidence="2">
    <location>
        <begin position="12"/>
        <end position="147"/>
    </location>
</feature>
<feature type="region of interest" description="Interaction with MDFIC and MDFI" evidence="1">
    <location>
        <begin position="1"/>
        <end position="298"/>
    </location>
</feature>
<feature type="region of interest" description="Interaction with POLR2A" evidence="1">
    <location>
        <begin position="250"/>
        <end position="298"/>
    </location>
</feature>
<feature type="region of interest" description="Disordered" evidence="3">
    <location>
        <begin position="297"/>
        <end position="325"/>
    </location>
</feature>
<feature type="region of interest" description="Disordered" evidence="3">
    <location>
        <begin position="340"/>
        <end position="364"/>
    </location>
</feature>
<feature type="region of interest" description="Disordered" evidence="3">
    <location>
        <begin position="385"/>
        <end position="428"/>
    </location>
</feature>
<feature type="region of interest" description="Disordered" evidence="3">
    <location>
        <begin position="458"/>
        <end position="645"/>
    </location>
</feature>
<feature type="compositionally biased region" description="Polar residues" evidence="3">
    <location>
        <begin position="297"/>
        <end position="307"/>
    </location>
</feature>
<feature type="compositionally biased region" description="Polar residues" evidence="3">
    <location>
        <begin position="314"/>
        <end position="325"/>
    </location>
</feature>
<feature type="compositionally biased region" description="Basic and acidic residues" evidence="3">
    <location>
        <begin position="395"/>
        <end position="409"/>
    </location>
</feature>
<feature type="compositionally biased region" description="Basic and acidic residues" evidence="3">
    <location>
        <begin position="489"/>
        <end position="503"/>
    </location>
</feature>
<feature type="compositionally biased region" description="Basic and acidic residues" evidence="3">
    <location>
        <begin position="517"/>
        <end position="543"/>
    </location>
</feature>
<feature type="compositionally biased region" description="Basic and acidic residues" evidence="3">
    <location>
        <begin position="552"/>
        <end position="565"/>
    </location>
</feature>
<feature type="compositionally biased region" description="Basic residues" evidence="3">
    <location>
        <begin position="566"/>
        <end position="576"/>
    </location>
</feature>
<feature type="compositionally biased region" description="Low complexity" evidence="3">
    <location>
        <begin position="631"/>
        <end position="645"/>
    </location>
</feature>
<feature type="modified residue" description="Phosphoserine" evidence="11">
    <location>
        <position position="477"/>
    </location>
</feature>
<feature type="modified residue" description="Phosphoserine" evidence="11">
    <location>
        <position position="596"/>
    </location>
</feature>
<feature type="cross-link" description="Glycyl lysine isopeptide (Lys-Gly) (interchain with G-Cter in SUMO2)" evidence="1">
    <location>
        <position position="404"/>
    </location>
</feature>
<feature type="splice variant" id="VSP_058225" description="In isoform 2." evidence="8">
    <original>SSSSSSSVKQYLSSHSSVFNH</original>
    <variation>GLRTSQHPRETGQETSGAPRS</variation>
    <location>
        <begin position="637"/>
        <end position="657"/>
    </location>
</feature>
<feature type="splice variant" id="VSP_058226" description="In isoform 2." evidence="8">
    <location>
        <begin position="658"/>
        <end position="723"/>
    </location>
</feature>
<feature type="sequence conflict" description="In Ref. 1; AFV36780/AFV36779." evidence="9" ref="1">
    <original>V</original>
    <variation>A</variation>
    <location>
        <position position="470"/>
    </location>
</feature>
<reference key="1">
    <citation type="journal article" date="2013" name="J. Cell. Biochem.">
        <title>Activation and function of murine Cyclin T2A and Cyclin T2B during skeletal muscle differentiation.</title>
        <authorList>
            <person name="Marchesi I."/>
            <person name="Nieddu V."/>
            <person name="Caracciolo V."/>
            <person name="Maioli M."/>
            <person name="Gaspa L."/>
            <person name="Giordano A."/>
            <person name="Bagella L."/>
        </authorList>
    </citation>
    <scope>NUCLEOTIDE SEQUENCE [MRNA]</scope>
    <scope>TISSUE SPECIFICITY</scope>
    <scope>SUBCELLULAR LOCATION</scope>
    <scope>FUNCTION (ISOFORMS 1 AND 2)</scope>
    <source>
        <tissue>Skeletal muscle</tissue>
    </source>
</reference>
<reference key="2">
    <citation type="journal article" date="2005" name="Science">
        <title>The transcriptional landscape of the mammalian genome.</title>
        <authorList>
            <person name="Carninci P."/>
            <person name="Kasukawa T."/>
            <person name="Katayama S."/>
            <person name="Gough J."/>
            <person name="Frith M.C."/>
            <person name="Maeda N."/>
            <person name="Oyama R."/>
            <person name="Ravasi T."/>
            <person name="Lenhard B."/>
            <person name="Wells C."/>
            <person name="Kodzius R."/>
            <person name="Shimokawa K."/>
            <person name="Bajic V.B."/>
            <person name="Brenner S.E."/>
            <person name="Batalov S."/>
            <person name="Forrest A.R."/>
            <person name="Zavolan M."/>
            <person name="Davis M.J."/>
            <person name="Wilming L.G."/>
            <person name="Aidinis V."/>
            <person name="Allen J.E."/>
            <person name="Ambesi-Impiombato A."/>
            <person name="Apweiler R."/>
            <person name="Aturaliya R.N."/>
            <person name="Bailey T.L."/>
            <person name="Bansal M."/>
            <person name="Baxter L."/>
            <person name="Beisel K.W."/>
            <person name="Bersano T."/>
            <person name="Bono H."/>
            <person name="Chalk A.M."/>
            <person name="Chiu K.P."/>
            <person name="Choudhary V."/>
            <person name="Christoffels A."/>
            <person name="Clutterbuck D.R."/>
            <person name="Crowe M.L."/>
            <person name="Dalla E."/>
            <person name="Dalrymple B.P."/>
            <person name="de Bono B."/>
            <person name="Della Gatta G."/>
            <person name="di Bernardo D."/>
            <person name="Down T."/>
            <person name="Engstrom P."/>
            <person name="Fagiolini M."/>
            <person name="Faulkner G."/>
            <person name="Fletcher C.F."/>
            <person name="Fukushima T."/>
            <person name="Furuno M."/>
            <person name="Futaki S."/>
            <person name="Gariboldi M."/>
            <person name="Georgii-Hemming P."/>
            <person name="Gingeras T.R."/>
            <person name="Gojobori T."/>
            <person name="Green R.E."/>
            <person name="Gustincich S."/>
            <person name="Harbers M."/>
            <person name="Hayashi Y."/>
            <person name="Hensch T.K."/>
            <person name="Hirokawa N."/>
            <person name="Hill D."/>
            <person name="Huminiecki L."/>
            <person name="Iacono M."/>
            <person name="Ikeo K."/>
            <person name="Iwama A."/>
            <person name="Ishikawa T."/>
            <person name="Jakt M."/>
            <person name="Kanapin A."/>
            <person name="Katoh M."/>
            <person name="Kawasawa Y."/>
            <person name="Kelso J."/>
            <person name="Kitamura H."/>
            <person name="Kitano H."/>
            <person name="Kollias G."/>
            <person name="Krishnan S.P."/>
            <person name="Kruger A."/>
            <person name="Kummerfeld S.K."/>
            <person name="Kurochkin I.V."/>
            <person name="Lareau L.F."/>
            <person name="Lazarevic D."/>
            <person name="Lipovich L."/>
            <person name="Liu J."/>
            <person name="Liuni S."/>
            <person name="McWilliam S."/>
            <person name="Madan Babu M."/>
            <person name="Madera M."/>
            <person name="Marchionni L."/>
            <person name="Matsuda H."/>
            <person name="Matsuzawa S."/>
            <person name="Miki H."/>
            <person name="Mignone F."/>
            <person name="Miyake S."/>
            <person name="Morris K."/>
            <person name="Mottagui-Tabar S."/>
            <person name="Mulder N."/>
            <person name="Nakano N."/>
            <person name="Nakauchi H."/>
            <person name="Ng P."/>
            <person name="Nilsson R."/>
            <person name="Nishiguchi S."/>
            <person name="Nishikawa S."/>
            <person name="Nori F."/>
            <person name="Ohara O."/>
            <person name="Okazaki Y."/>
            <person name="Orlando V."/>
            <person name="Pang K.C."/>
            <person name="Pavan W.J."/>
            <person name="Pavesi G."/>
            <person name="Pesole G."/>
            <person name="Petrovsky N."/>
            <person name="Piazza S."/>
            <person name="Reed J."/>
            <person name="Reid J.F."/>
            <person name="Ring B.Z."/>
            <person name="Ringwald M."/>
            <person name="Rost B."/>
            <person name="Ruan Y."/>
            <person name="Salzberg S.L."/>
            <person name="Sandelin A."/>
            <person name="Schneider C."/>
            <person name="Schoenbach C."/>
            <person name="Sekiguchi K."/>
            <person name="Semple C.A."/>
            <person name="Seno S."/>
            <person name="Sessa L."/>
            <person name="Sheng Y."/>
            <person name="Shibata Y."/>
            <person name="Shimada H."/>
            <person name="Shimada K."/>
            <person name="Silva D."/>
            <person name="Sinclair B."/>
            <person name="Sperling S."/>
            <person name="Stupka E."/>
            <person name="Sugiura K."/>
            <person name="Sultana R."/>
            <person name="Takenaka Y."/>
            <person name="Taki K."/>
            <person name="Tammoja K."/>
            <person name="Tan S.L."/>
            <person name="Tang S."/>
            <person name="Taylor M.S."/>
            <person name="Tegner J."/>
            <person name="Teichmann S.A."/>
            <person name="Ueda H.R."/>
            <person name="van Nimwegen E."/>
            <person name="Verardo R."/>
            <person name="Wei C.L."/>
            <person name="Yagi K."/>
            <person name="Yamanishi H."/>
            <person name="Zabarovsky E."/>
            <person name="Zhu S."/>
            <person name="Zimmer A."/>
            <person name="Hide W."/>
            <person name="Bult C."/>
            <person name="Grimmond S.M."/>
            <person name="Teasdale R.D."/>
            <person name="Liu E.T."/>
            <person name="Brusic V."/>
            <person name="Quackenbush J."/>
            <person name="Wahlestedt C."/>
            <person name="Mattick J.S."/>
            <person name="Hume D.A."/>
            <person name="Kai C."/>
            <person name="Sasaki D."/>
            <person name="Tomaru Y."/>
            <person name="Fukuda S."/>
            <person name="Kanamori-Katayama M."/>
            <person name="Suzuki M."/>
            <person name="Aoki J."/>
            <person name="Arakawa T."/>
            <person name="Iida J."/>
            <person name="Imamura K."/>
            <person name="Itoh M."/>
            <person name="Kato T."/>
            <person name="Kawaji H."/>
            <person name="Kawagashira N."/>
            <person name="Kawashima T."/>
            <person name="Kojima M."/>
            <person name="Kondo S."/>
            <person name="Konno H."/>
            <person name="Nakano K."/>
            <person name="Ninomiya N."/>
            <person name="Nishio T."/>
            <person name="Okada M."/>
            <person name="Plessy C."/>
            <person name="Shibata K."/>
            <person name="Shiraki T."/>
            <person name="Suzuki S."/>
            <person name="Tagami M."/>
            <person name="Waki K."/>
            <person name="Watahiki A."/>
            <person name="Okamura-Oho Y."/>
            <person name="Suzuki H."/>
            <person name="Kawai J."/>
            <person name="Hayashizaki Y."/>
        </authorList>
    </citation>
    <scope>NUCLEOTIDE SEQUENCE [LARGE SCALE MRNA]</scope>
</reference>
<reference key="3">
    <citation type="journal article" date="2009" name="PLoS Biol.">
        <title>Lineage-specific biology revealed by a finished genome assembly of the mouse.</title>
        <authorList>
            <person name="Church D.M."/>
            <person name="Goodstadt L."/>
            <person name="Hillier L.W."/>
            <person name="Zody M.C."/>
            <person name="Goldstein S."/>
            <person name="She X."/>
            <person name="Bult C.J."/>
            <person name="Agarwala R."/>
            <person name="Cherry J.L."/>
            <person name="DiCuccio M."/>
            <person name="Hlavina W."/>
            <person name="Kapustin Y."/>
            <person name="Meric P."/>
            <person name="Maglott D."/>
            <person name="Birtle Z."/>
            <person name="Marques A.C."/>
            <person name="Graves T."/>
            <person name="Zhou S."/>
            <person name="Teague B."/>
            <person name="Potamousis K."/>
            <person name="Churas C."/>
            <person name="Place M."/>
            <person name="Herschleb J."/>
            <person name="Runnheim R."/>
            <person name="Forrest D."/>
            <person name="Amos-Landgraf J."/>
            <person name="Schwartz D.C."/>
            <person name="Cheng Z."/>
            <person name="Lindblad-Toh K."/>
            <person name="Eichler E.E."/>
            <person name="Ponting C.P."/>
        </authorList>
    </citation>
    <scope>NUCLEOTIDE SEQUENCE [LARGE SCALE GENOMIC DNA]</scope>
    <source>
        <strain>C57BL/6J</strain>
    </source>
</reference>
<reference key="4">
    <citation type="journal article" date="2004" name="Genome Res.">
        <title>The status, quality, and expansion of the NIH full-length cDNA project: the Mammalian Gene Collection (MGC).</title>
        <authorList>
            <consortium name="The MGC Project Team"/>
        </authorList>
    </citation>
    <scope>NUCLEOTIDE SEQUENCE [LARGE SCALE MRNA]</scope>
    <source>
        <tissue>Limb</tissue>
    </source>
</reference>
<reference key="5">
    <citation type="journal article" date="2002" name="Oncogene">
        <title>Activation of MyoD-dependent transcription by cdk9/cyclin T2.</title>
        <authorList>
            <person name="Simone C."/>
            <person name="Stiegler P."/>
            <person name="Bagella L."/>
            <person name="Pucci B."/>
            <person name="Bellan C."/>
            <person name="De Falco G."/>
            <person name="De Luca A."/>
            <person name="Guanti G."/>
            <person name="Puri P.L."/>
            <person name="Giordano A."/>
        </authorList>
    </citation>
    <scope>INTERACTION WITH MYOD1 AND CDK9</scope>
    <scope>FUNCTION</scope>
</reference>
<reference key="6">
    <citation type="journal article" date="2006" name="J. Cell. Physiol.">
        <title>MyoD recruits the cdk9/cyclin T2 complex on myogenic-genes regulatory regions.</title>
        <authorList>
            <person name="Giacinti C."/>
            <person name="Bagella L."/>
            <person name="Puri P.L."/>
            <person name="Giordano A."/>
            <person name="Simone C."/>
        </authorList>
    </citation>
    <scope>FUNCTION</scope>
</reference>
<reference key="7">
    <citation type="journal article" date="2009" name="Mol. Cell. Biol.">
        <title>Cyclin T2 is essential for mouse embryogenesis.</title>
        <authorList>
            <person name="Kohoutek J."/>
            <person name="Li Q."/>
            <person name="Blazek D."/>
            <person name="Luo Z."/>
            <person name="Jiang H."/>
            <person name="Peterlin B.M."/>
        </authorList>
    </citation>
    <scope>DISRUPTION PHENOTYPE</scope>
    <scope>DEVELOPMENTAL STAGE</scope>
    <scope>TISSUE SPECIFICITY</scope>
    <scope>FUNCTION</scope>
</reference>
<reference key="8">
    <citation type="journal article" date="2010" name="Cell">
        <title>A tissue-specific atlas of mouse protein phosphorylation and expression.</title>
        <authorList>
            <person name="Huttlin E.L."/>
            <person name="Jedrychowski M.P."/>
            <person name="Elias J.E."/>
            <person name="Goswami T."/>
            <person name="Rad R."/>
            <person name="Beausoleil S.A."/>
            <person name="Villen J."/>
            <person name="Haas W."/>
            <person name="Sowa M.E."/>
            <person name="Gygi S.P."/>
        </authorList>
    </citation>
    <scope>PHOSPHORYLATION [LARGE SCALE ANALYSIS] AT SER-477 AND SER-596</scope>
    <scope>IDENTIFICATION BY MASS SPECTROMETRY [LARGE SCALE ANALYSIS]</scope>
    <source>
        <tissue>Brain</tissue>
        <tissue>Kidney</tissue>
        <tissue>Liver</tissue>
        <tissue>Lung</tissue>
        <tissue>Pancreas</tissue>
        <tissue>Spleen</tissue>
        <tissue>Testis</tissue>
    </source>
</reference>
<comment type="function">
    <text evidence="1 4 5 6 7">Regulatory subunit of the cyclin-dependent kinase pair (CDK9/cyclin T) complex, also called positive transcription elongation factor B (P-TEFB), which is proposed to facilitate the transition from abortive to production elongation by phosphorylating the CTD (carboxy-terminal domain) of the large subunit of RNA polymerase II (RNAP II). The activity of this complex is regulated by binding with 7SK snRNA (By similarity). Plays a role during muscle differentiation; P-TEFB complex interacts with MYOD1; this tripartite complex promotes the transcriptional activity of MYOD1 through its CDK9-mediated phosphorylation and binds the chromatin of promoters and enhancers of muscle-specific genes; this event correlates with hyperphosphorylation of the CTD domain of RNA pol II (PubMed:12037670, PubMed:16245309, PubMed:23060074). In addition, enhances MYOD1-dependent transcription through interaction with PKN1 (By similarity). Involved in early embryo development (PubMed:19364821).</text>
</comment>
<comment type="subunit">
    <text evidence="1 4">Interacts with CDK9 to form P-TEFb. Interacts with POLR2A (via the C-terminal domain (CTD)); mediates transcriptional activity. Interacts with HEXIM1; mediates formation of a tripartite complex with KPNA2. Interacts with HEXIM2. Interacts with PKN1; enhances MYOD1-dependent transcription. P-TEFB complex interacts with RB1; promotes phosphorylation of RB1 (By similarity). P-TEFB complex interacts with MYOD1; promotes the transcriptional activity of MYOD1 through its CDK9-mediated phosphorylation (PubMed:12037670). Interacts with MDFI and MDFIC (By similarity).</text>
</comment>
<comment type="subcellular location">
    <subcellularLocation>
        <location evidence="7">Cytoplasm</location>
        <location evidence="7">Perinuclear region</location>
    </subcellularLocation>
    <subcellularLocation>
        <location evidence="7">Nucleus</location>
    </subcellularLocation>
    <text evidence="7">Nucleus in differentiating cells.</text>
</comment>
<comment type="alternative products">
    <event type="alternative splicing"/>
    <isoform>
        <id>Q7TQK0-1</id>
        <name>1</name>
        <name evidence="8">cyclin T2A</name>
        <name evidence="8">CycT2a</name>
        <sequence type="displayed"/>
    </isoform>
    <isoform>
        <id>Q7TQK0-2</id>
        <name>2</name>
        <name evidence="8">cyclin T2B</name>
        <name evidence="8">CycT2b</name>
        <sequence type="described" ref="VSP_058225 VSP_058226"/>
    </isoform>
</comment>
<comment type="tissue specificity">
    <molecule>Isoform 2</molecule>
    <text evidence="6 7">Highly expressed in all phases of skeletal muscle differentiation, particularly in later stages (PubMed:23060074). Highly expressed in skeletal muscle. Significantly expressed in heart, brain, kidney, liver, testis, and pancreas (PubMed:19364821).</text>
</comment>
<comment type="developmental stage">
    <text evidence="6">Expressed in all forming organs and supporting tissues in 10.5 to 14.5 dpc. Expressed in embryonic ectoderm and the forming brain and neural tube in 7.5 and 8.5/9.5 dpc embryos, respectively.</text>
</comment>
<comment type="disruption phenotype">
    <text evidence="6">The homozygous knockout of Ccnt2 is embryonic lethal.</text>
</comment>
<comment type="similarity">
    <text evidence="9">Belongs to the cyclin family. Cyclin C subfamily.</text>
</comment>
<keyword id="KW-0025">Alternative splicing</keyword>
<keyword id="KW-0131">Cell cycle</keyword>
<keyword id="KW-0132">Cell division</keyword>
<keyword id="KW-0195">Cyclin</keyword>
<keyword id="KW-0963">Cytoplasm</keyword>
<keyword id="KW-0945">Host-virus interaction</keyword>
<keyword id="KW-1017">Isopeptide bond</keyword>
<keyword id="KW-0539">Nucleus</keyword>
<keyword id="KW-0597">Phosphoprotein</keyword>
<keyword id="KW-1185">Reference proteome</keyword>
<keyword id="KW-0804">Transcription</keyword>
<keyword id="KW-0805">Transcription regulation</keyword>
<keyword id="KW-0832">Ubl conjugation</keyword>